<keyword id="KW-0963">Cytoplasm</keyword>
<keyword id="KW-0620">Polyamine biosynthesis</keyword>
<keyword id="KW-0745">Spermidine biosynthesis</keyword>
<keyword id="KW-0808">Transferase</keyword>
<comment type="function">
    <text evidence="1">Catalyzes the irreversible transfer of a propylamine group from the amino donor S-adenosylmethioninamine (decarboxy-AdoMet) to putrescine (1,4-diaminobutane) to yield spermidine.</text>
</comment>
<comment type="catalytic activity">
    <reaction evidence="1">
        <text>S-adenosyl 3-(methylsulfanyl)propylamine + putrescine = S-methyl-5'-thioadenosine + spermidine + H(+)</text>
        <dbReference type="Rhea" id="RHEA:12721"/>
        <dbReference type="ChEBI" id="CHEBI:15378"/>
        <dbReference type="ChEBI" id="CHEBI:17509"/>
        <dbReference type="ChEBI" id="CHEBI:57443"/>
        <dbReference type="ChEBI" id="CHEBI:57834"/>
        <dbReference type="ChEBI" id="CHEBI:326268"/>
        <dbReference type="EC" id="2.5.1.16"/>
    </reaction>
</comment>
<comment type="pathway">
    <text evidence="1">Amine and polyamine biosynthesis; spermidine biosynthesis; spermidine from putrescine: step 1/1.</text>
</comment>
<comment type="subunit">
    <text evidence="1">Homodimer or homotetramer.</text>
</comment>
<comment type="subcellular location">
    <subcellularLocation>
        <location evidence="1">Cytoplasm</location>
    </subcellularLocation>
</comment>
<comment type="similarity">
    <text evidence="1">Belongs to the spermidine/spermine synthase family.</text>
</comment>
<name>SPEE_THEPX</name>
<reference key="1">
    <citation type="submission" date="2008-01" db="EMBL/GenBank/DDBJ databases">
        <title>Complete sequence of Thermoanaerobacter sp. X514.</title>
        <authorList>
            <consortium name="US DOE Joint Genome Institute"/>
            <person name="Copeland A."/>
            <person name="Lucas S."/>
            <person name="Lapidus A."/>
            <person name="Barry K."/>
            <person name="Glavina del Rio T."/>
            <person name="Dalin E."/>
            <person name="Tice H."/>
            <person name="Pitluck S."/>
            <person name="Bruce D."/>
            <person name="Goodwin L."/>
            <person name="Saunders E."/>
            <person name="Brettin T."/>
            <person name="Detter J.C."/>
            <person name="Han C."/>
            <person name="Schmutz J."/>
            <person name="Larimer F."/>
            <person name="Land M."/>
            <person name="Hauser L."/>
            <person name="Kyrpides N."/>
            <person name="Kim E."/>
            <person name="Hemme C."/>
            <person name="Fields M.W."/>
            <person name="He Z."/>
            <person name="Zhou J."/>
            <person name="Richardson P."/>
        </authorList>
    </citation>
    <scope>NUCLEOTIDE SEQUENCE [LARGE SCALE GENOMIC DNA]</scope>
    <source>
        <strain>X514</strain>
    </source>
</reference>
<proteinExistence type="inferred from homology"/>
<sequence length="277" mass="31574">MELWFTENQDENLRFSLKVKETLVVEKTPYQHLAILDTYQFGRVLTLDGILQTTEKDEFVYHEMIVHVPLFTHKNPKSVLIVGGGDGGSVREVLKHPSVERVVLAEIDEAVVRNSKKYLPTISQALDDPRVEIMIGDGIKYVNEHKNEFDVVIVDSTDPIGPAVGLFTSDFYKAVYECLKEDGIIVAQTESPFIYGKLINKLSKMFKEIYPITKAYIATIPTYPGSLWTFTMGSKKYDPEEVDINSIPRIDTKYYTPEIHKAAFVLPKFVKDIFDEV</sequence>
<gene>
    <name evidence="1" type="primary">speE</name>
    <name type="ordered locus">Teth514_1580</name>
</gene>
<protein>
    <recommendedName>
        <fullName evidence="1">Polyamine aminopropyltransferase</fullName>
    </recommendedName>
    <alternativeName>
        <fullName evidence="1">Putrescine aminopropyltransferase</fullName>
        <shortName evidence="1">PAPT</shortName>
    </alternativeName>
    <alternativeName>
        <fullName evidence="1">Spermidine synthase</fullName>
        <shortName evidence="1">SPDS</shortName>
        <shortName evidence="1">SPDSY</shortName>
        <ecNumber evidence="1">2.5.1.16</ecNumber>
    </alternativeName>
</protein>
<accession>B0K172</accession>
<dbReference type="EC" id="2.5.1.16" evidence="1"/>
<dbReference type="EMBL" id="CP000923">
    <property type="protein sequence ID" value="ABY92867.1"/>
    <property type="molecule type" value="Genomic_DNA"/>
</dbReference>
<dbReference type="RefSeq" id="WP_003867984.1">
    <property type="nucleotide sequence ID" value="NC_010320.1"/>
</dbReference>
<dbReference type="SMR" id="B0K172"/>
<dbReference type="KEGG" id="tex:Teth514_1580"/>
<dbReference type="HOGENOM" id="CLU_048199_0_0_9"/>
<dbReference type="UniPathway" id="UPA00248">
    <property type="reaction ID" value="UER00314"/>
</dbReference>
<dbReference type="Proteomes" id="UP000002155">
    <property type="component" value="Chromosome"/>
</dbReference>
<dbReference type="GO" id="GO:0005829">
    <property type="term" value="C:cytosol"/>
    <property type="evidence" value="ECO:0007669"/>
    <property type="project" value="TreeGrafter"/>
</dbReference>
<dbReference type="GO" id="GO:0004766">
    <property type="term" value="F:spermidine synthase activity"/>
    <property type="evidence" value="ECO:0007669"/>
    <property type="project" value="UniProtKB-UniRule"/>
</dbReference>
<dbReference type="GO" id="GO:0008295">
    <property type="term" value="P:spermidine biosynthetic process"/>
    <property type="evidence" value="ECO:0007669"/>
    <property type="project" value="UniProtKB-UniRule"/>
</dbReference>
<dbReference type="CDD" id="cd02440">
    <property type="entry name" value="AdoMet_MTases"/>
    <property type="match status" value="1"/>
</dbReference>
<dbReference type="FunFam" id="3.40.50.150:FF:000056">
    <property type="entry name" value="Polyamine aminopropyltransferase"/>
    <property type="match status" value="1"/>
</dbReference>
<dbReference type="Gene3D" id="2.30.140.10">
    <property type="entry name" value="Spermidine synthase, tetramerisation domain"/>
    <property type="match status" value="1"/>
</dbReference>
<dbReference type="Gene3D" id="3.40.50.150">
    <property type="entry name" value="Vaccinia Virus protein VP39"/>
    <property type="match status" value="1"/>
</dbReference>
<dbReference type="HAMAP" id="MF_00198">
    <property type="entry name" value="Spermidine_synth"/>
    <property type="match status" value="1"/>
</dbReference>
<dbReference type="InterPro" id="IPR030374">
    <property type="entry name" value="PABS"/>
</dbReference>
<dbReference type="InterPro" id="IPR030373">
    <property type="entry name" value="PABS_CS"/>
</dbReference>
<dbReference type="InterPro" id="IPR029063">
    <property type="entry name" value="SAM-dependent_MTases_sf"/>
</dbReference>
<dbReference type="InterPro" id="IPR001045">
    <property type="entry name" value="Spermi_synthase"/>
</dbReference>
<dbReference type="InterPro" id="IPR035246">
    <property type="entry name" value="Spermidine_synt_N"/>
</dbReference>
<dbReference type="InterPro" id="IPR037163">
    <property type="entry name" value="Spermidine_synt_N_sf"/>
</dbReference>
<dbReference type="NCBIfam" id="NF002010">
    <property type="entry name" value="PRK00811.1"/>
    <property type="match status" value="1"/>
</dbReference>
<dbReference type="NCBIfam" id="TIGR00417">
    <property type="entry name" value="speE"/>
    <property type="match status" value="1"/>
</dbReference>
<dbReference type="PANTHER" id="PTHR11558:SF11">
    <property type="entry name" value="SPERMIDINE SYNTHASE"/>
    <property type="match status" value="1"/>
</dbReference>
<dbReference type="PANTHER" id="PTHR11558">
    <property type="entry name" value="SPERMIDINE/SPERMINE SYNTHASE"/>
    <property type="match status" value="1"/>
</dbReference>
<dbReference type="Pfam" id="PF17284">
    <property type="entry name" value="Spermine_synt_N"/>
    <property type="match status" value="1"/>
</dbReference>
<dbReference type="Pfam" id="PF01564">
    <property type="entry name" value="Spermine_synth"/>
    <property type="match status" value="1"/>
</dbReference>
<dbReference type="SUPFAM" id="SSF53335">
    <property type="entry name" value="S-adenosyl-L-methionine-dependent methyltransferases"/>
    <property type="match status" value="1"/>
</dbReference>
<dbReference type="PROSITE" id="PS01330">
    <property type="entry name" value="PABS_1"/>
    <property type="match status" value="1"/>
</dbReference>
<dbReference type="PROSITE" id="PS51006">
    <property type="entry name" value="PABS_2"/>
    <property type="match status" value="1"/>
</dbReference>
<feature type="chain" id="PRO_1000197482" description="Polyamine aminopropyltransferase">
    <location>
        <begin position="1"/>
        <end position="277"/>
    </location>
</feature>
<feature type="domain" description="PABS" evidence="1">
    <location>
        <begin position="2"/>
        <end position="235"/>
    </location>
</feature>
<feature type="active site" description="Proton acceptor" evidence="1">
    <location>
        <position position="155"/>
    </location>
</feature>
<feature type="binding site" evidence="1">
    <location>
        <position position="31"/>
    </location>
    <ligand>
        <name>S-methyl-5'-thioadenosine</name>
        <dbReference type="ChEBI" id="CHEBI:17509"/>
    </ligand>
</feature>
<feature type="binding site" evidence="1">
    <location>
        <position position="62"/>
    </location>
    <ligand>
        <name>spermidine</name>
        <dbReference type="ChEBI" id="CHEBI:57834"/>
    </ligand>
</feature>
<feature type="binding site" evidence="1">
    <location>
        <position position="86"/>
    </location>
    <ligand>
        <name>spermidine</name>
        <dbReference type="ChEBI" id="CHEBI:57834"/>
    </ligand>
</feature>
<feature type="binding site" evidence="1">
    <location>
        <position position="106"/>
    </location>
    <ligand>
        <name>S-methyl-5'-thioadenosine</name>
        <dbReference type="ChEBI" id="CHEBI:17509"/>
    </ligand>
</feature>
<feature type="binding site" evidence="1">
    <location>
        <begin position="137"/>
        <end position="138"/>
    </location>
    <ligand>
        <name>S-methyl-5'-thioadenosine</name>
        <dbReference type="ChEBI" id="CHEBI:17509"/>
    </ligand>
</feature>
<feature type="binding site" evidence="1">
    <location>
        <begin position="155"/>
        <end position="158"/>
    </location>
    <ligand>
        <name>spermidine</name>
        <dbReference type="ChEBI" id="CHEBI:57834"/>
    </ligand>
</feature>
<feature type="binding site" evidence="1">
    <location>
        <position position="162"/>
    </location>
    <ligand>
        <name>S-methyl-5'-thioadenosine</name>
        <dbReference type="ChEBI" id="CHEBI:17509"/>
    </ligand>
</feature>
<organism>
    <name type="scientific">Thermoanaerobacter sp. (strain X514)</name>
    <dbReference type="NCBI Taxonomy" id="399726"/>
    <lineage>
        <taxon>Bacteria</taxon>
        <taxon>Bacillati</taxon>
        <taxon>Bacillota</taxon>
        <taxon>Clostridia</taxon>
        <taxon>Thermoanaerobacterales</taxon>
        <taxon>Thermoanaerobacteraceae</taxon>
        <taxon>Thermoanaerobacter</taxon>
    </lineage>
</organism>
<evidence type="ECO:0000255" key="1">
    <source>
        <dbReference type="HAMAP-Rule" id="MF_00198"/>
    </source>
</evidence>